<organism>
    <name type="scientific">Arabidopsis thaliana</name>
    <name type="common">Mouse-ear cress</name>
    <dbReference type="NCBI Taxonomy" id="3702"/>
    <lineage>
        <taxon>Eukaryota</taxon>
        <taxon>Viridiplantae</taxon>
        <taxon>Streptophyta</taxon>
        <taxon>Embryophyta</taxon>
        <taxon>Tracheophyta</taxon>
        <taxon>Spermatophyta</taxon>
        <taxon>Magnoliopsida</taxon>
        <taxon>eudicotyledons</taxon>
        <taxon>Gunneridae</taxon>
        <taxon>Pentapetalae</taxon>
        <taxon>rosids</taxon>
        <taxon>malvids</taxon>
        <taxon>Brassicales</taxon>
        <taxon>Brassicaceae</taxon>
        <taxon>Camelineae</taxon>
        <taxon>Arabidopsis</taxon>
    </lineage>
</organism>
<reference key="1">
    <citation type="journal article" date="2000" name="DNA Res.">
        <title>Structural analysis of Arabidopsis thaliana chromosome 3. I. Sequence features of the regions of 4,504,864 bp covered by sixty P1 and TAC clones.</title>
        <authorList>
            <person name="Sato S."/>
            <person name="Nakamura Y."/>
            <person name="Kaneko T."/>
            <person name="Katoh T."/>
            <person name="Asamizu E."/>
            <person name="Tabata S."/>
        </authorList>
    </citation>
    <scope>NUCLEOTIDE SEQUENCE [LARGE SCALE GENOMIC DNA]</scope>
    <source>
        <strain>cv. Columbia</strain>
    </source>
</reference>
<reference key="2">
    <citation type="journal article" date="2017" name="Plant J.">
        <title>Araport11: a complete reannotation of the Arabidopsis thaliana reference genome.</title>
        <authorList>
            <person name="Cheng C.Y."/>
            <person name="Krishnakumar V."/>
            <person name="Chan A.P."/>
            <person name="Thibaud-Nissen F."/>
            <person name="Schobel S."/>
            <person name="Town C.D."/>
        </authorList>
    </citation>
    <scope>GENOME REANNOTATION</scope>
    <source>
        <strain>cv. Columbia</strain>
    </source>
</reference>
<reference key="3">
    <citation type="submission" date="2006-08" db="EMBL/GenBank/DDBJ databases">
        <title>Arabidopsis ORF Clones.</title>
        <authorList>
            <person name="Quinitio C."/>
            <person name="Chen H."/>
            <person name="Kim C.J."/>
            <person name="Shinn P."/>
            <person name="Ecker J.R."/>
        </authorList>
    </citation>
    <scope>NUCLEOTIDE SEQUENCE [LARGE SCALE MRNA]</scope>
    <source>
        <strain>cv. Columbia</strain>
    </source>
</reference>
<reference key="4">
    <citation type="journal article" date="2003" name="Trends Plant Sci.">
        <title>Growth signalling pathways in Arabidopsis and the AGC protein kinases.</title>
        <authorList>
            <person name="Boegre L."/>
            <person name="Okresz L."/>
            <person name="Henriques R."/>
            <person name="Anthony R.G."/>
        </authorList>
    </citation>
    <scope>GENE FAMILY</scope>
</reference>
<reference key="5">
    <citation type="journal article" date="2012" name="Proc. Natl. Acad. Sci. U.S.A.">
        <title>Regulation of planar growth by the Arabidopsis AGC protein kinase UNICORN.</title>
        <authorList>
            <person name="Enugutti B."/>
            <person name="Kirchhelle C."/>
            <person name="Oelschner M."/>
            <person name="Torres Ruiz R.A."/>
            <person name="Schliebner I."/>
            <person name="Leister D."/>
            <person name="Schneitz K."/>
        </authorList>
    </citation>
    <scope>FUNCTION</scope>
    <scope>SUBCELLULAR LOCATION</scope>
    <scope>TISSUE SPECIFICITY</scope>
    <scope>DISRUPTION PHENOTYPE</scope>
</reference>
<comment type="function">
    <text evidence="4">Regulates planar ovule integument development.</text>
</comment>
<comment type="catalytic activity">
    <reaction evidence="1">
        <text>L-seryl-[protein] + ATP = O-phospho-L-seryl-[protein] + ADP + H(+)</text>
        <dbReference type="Rhea" id="RHEA:17989"/>
        <dbReference type="Rhea" id="RHEA-COMP:9863"/>
        <dbReference type="Rhea" id="RHEA-COMP:11604"/>
        <dbReference type="ChEBI" id="CHEBI:15378"/>
        <dbReference type="ChEBI" id="CHEBI:29999"/>
        <dbReference type="ChEBI" id="CHEBI:30616"/>
        <dbReference type="ChEBI" id="CHEBI:83421"/>
        <dbReference type="ChEBI" id="CHEBI:456216"/>
        <dbReference type="EC" id="2.7.11.1"/>
    </reaction>
</comment>
<comment type="catalytic activity">
    <reaction evidence="1">
        <text>L-threonyl-[protein] + ATP = O-phospho-L-threonyl-[protein] + ADP + H(+)</text>
        <dbReference type="Rhea" id="RHEA:46608"/>
        <dbReference type="Rhea" id="RHEA-COMP:11060"/>
        <dbReference type="Rhea" id="RHEA-COMP:11605"/>
        <dbReference type="ChEBI" id="CHEBI:15378"/>
        <dbReference type="ChEBI" id="CHEBI:30013"/>
        <dbReference type="ChEBI" id="CHEBI:30616"/>
        <dbReference type="ChEBI" id="CHEBI:61977"/>
        <dbReference type="ChEBI" id="CHEBI:456216"/>
        <dbReference type="EC" id="2.7.11.1"/>
    </reaction>
</comment>
<comment type="subcellular location">
    <subcellularLocation>
        <location evidence="4">Cytoplasm</location>
    </subcellularLocation>
    <subcellularLocation>
        <location evidence="4">Nucleus</location>
    </subcellularLocation>
</comment>
<comment type="tissue specificity">
    <text evidence="4">Expressed in the epidermis and cortex of the transition zone of the root apex. Expressed in rosette leaves, stems, flowers and siliques.</text>
</comment>
<comment type="disruption phenotype">
    <text evidence="4">No visible phenotype under normal growth conditions, but the double mutants ucn-2 and ucnl-5 are embryonic lethal.</text>
</comment>
<comment type="similarity">
    <text evidence="7">Belongs to the protein kinase superfamily. AGC Ser/Thr protein kinase family.</text>
</comment>
<proteinExistence type="evidence at transcript level"/>
<feature type="chain" id="PRO_0000430953" description="Serine/threonine-protein kinase UCNL">
    <location>
        <begin position="1"/>
        <end position="408"/>
    </location>
</feature>
<feature type="domain" description="Protein kinase" evidence="2">
    <location>
        <begin position="21"/>
        <end position="341"/>
    </location>
</feature>
<feature type="domain" description="AGC-kinase C-terminal" evidence="3">
    <location>
        <begin position="342"/>
        <end position="408"/>
    </location>
</feature>
<feature type="active site" description="Proton acceptor" evidence="2">
    <location>
        <position position="152"/>
    </location>
</feature>
<feature type="binding site" evidence="2">
    <location>
        <begin position="27"/>
        <end position="35"/>
    </location>
    <ligand>
        <name>ATP</name>
        <dbReference type="ChEBI" id="CHEBI:30616"/>
    </ligand>
</feature>
<feature type="binding site" evidence="2">
    <location>
        <position position="54"/>
    </location>
    <ligand>
        <name>ATP</name>
        <dbReference type="ChEBI" id="CHEBI:30616"/>
    </ligand>
</feature>
<name>UNCL_ARATH</name>
<gene>
    <name evidence="6" type="primary">UCNL</name>
    <name evidence="5" type="synonym">AGC2-4</name>
    <name evidence="8" type="ordered locus">At3g20830</name>
    <name evidence="9" type="ORF">MOE17.14</name>
</gene>
<sequence length="408" mass="45889">MEPSPSSPPSSPPEILDLDSIKALKILGKGATGTVFLAHDVVSTSSSSSPFAVKLVPKSSASSLRRARWEIEVLRRLSVDSNQNPFLPRLLASFESPEYFAWAVPYCSGGDLNVLLHRQNDGVFSSSVIRFYVAEIVCALEHLHTMGIAYRDLKPENILIQQSGHVTLTDFDLSRSLKKPLRPHFYQPDPELIIDRKKSRSFSRLISPTAEKNKTGLKKTRSARVNPINRRKTSFSSGERSNSFVGTDEYVSPEVIRGDGHDFAVDWWALGVLTYEMMYGETPFKGKSKKETFRNVLMKEPEFAGKPNDLTDLIRRLLVKDPNRRLGCHRGAAEIKELAFFAGVRWDLLTEVLRPPFIPLRDDGELTVGGFDIREHFEKLRTTPSSAPPSPLRSPPHVCRKNDPFIEF</sequence>
<dbReference type="EC" id="2.7.11.1" evidence="1"/>
<dbReference type="EMBL" id="AB025629">
    <property type="protein sequence ID" value="BAB02491.1"/>
    <property type="molecule type" value="Genomic_DNA"/>
</dbReference>
<dbReference type="EMBL" id="CP002686">
    <property type="protein sequence ID" value="AEE76429.1"/>
    <property type="molecule type" value="Genomic_DNA"/>
</dbReference>
<dbReference type="EMBL" id="BT026453">
    <property type="protein sequence ID" value="ABH04560.1"/>
    <property type="molecule type" value="mRNA"/>
</dbReference>
<dbReference type="RefSeq" id="NP_188719.1">
    <property type="nucleotide sequence ID" value="NM_112974.3"/>
</dbReference>
<dbReference type="SMR" id="Q9LT38"/>
<dbReference type="BioGRID" id="6963">
    <property type="interactions" value="1"/>
</dbReference>
<dbReference type="FunCoup" id="Q9LT38">
    <property type="interactions" value="3"/>
</dbReference>
<dbReference type="STRING" id="3702.Q9LT38"/>
<dbReference type="PaxDb" id="3702-AT3G20830.1"/>
<dbReference type="ProteomicsDB" id="245275"/>
<dbReference type="EnsemblPlants" id="AT3G20830.1">
    <property type="protein sequence ID" value="AT3G20830.1"/>
    <property type="gene ID" value="AT3G20830"/>
</dbReference>
<dbReference type="GeneID" id="821631"/>
<dbReference type="Gramene" id="AT3G20830.1">
    <property type="protein sequence ID" value="AT3G20830.1"/>
    <property type="gene ID" value="AT3G20830"/>
</dbReference>
<dbReference type="KEGG" id="ath:AT3G20830"/>
<dbReference type="Araport" id="AT3G20830"/>
<dbReference type="TAIR" id="AT3G20830">
    <property type="gene designation" value="UCNL"/>
</dbReference>
<dbReference type="eggNOG" id="KOG0610">
    <property type="taxonomic scope" value="Eukaryota"/>
</dbReference>
<dbReference type="HOGENOM" id="CLU_000288_63_30_1"/>
<dbReference type="InParanoid" id="Q9LT38"/>
<dbReference type="OMA" id="EYFAWAV"/>
<dbReference type="OrthoDB" id="432483at2759"/>
<dbReference type="PhylomeDB" id="Q9LT38"/>
<dbReference type="PRO" id="PR:Q9LT38"/>
<dbReference type="Proteomes" id="UP000006548">
    <property type="component" value="Chromosome 3"/>
</dbReference>
<dbReference type="ExpressionAtlas" id="Q9LT38">
    <property type="expression patterns" value="baseline and differential"/>
</dbReference>
<dbReference type="GO" id="GO:0005737">
    <property type="term" value="C:cytoplasm"/>
    <property type="evidence" value="ECO:0007669"/>
    <property type="project" value="UniProtKB-SubCell"/>
</dbReference>
<dbReference type="GO" id="GO:0005634">
    <property type="term" value="C:nucleus"/>
    <property type="evidence" value="ECO:0007669"/>
    <property type="project" value="UniProtKB-SubCell"/>
</dbReference>
<dbReference type="GO" id="GO:0005524">
    <property type="term" value="F:ATP binding"/>
    <property type="evidence" value="ECO:0007669"/>
    <property type="project" value="UniProtKB-KW"/>
</dbReference>
<dbReference type="GO" id="GO:0016301">
    <property type="term" value="F:kinase activity"/>
    <property type="evidence" value="ECO:0000250"/>
    <property type="project" value="TAIR"/>
</dbReference>
<dbReference type="GO" id="GO:0106310">
    <property type="term" value="F:protein serine kinase activity"/>
    <property type="evidence" value="ECO:0007669"/>
    <property type="project" value="RHEA"/>
</dbReference>
<dbReference type="GO" id="GO:0004674">
    <property type="term" value="F:protein serine/threonine kinase activity"/>
    <property type="evidence" value="ECO:0007669"/>
    <property type="project" value="UniProtKB-KW"/>
</dbReference>
<dbReference type="FunFam" id="1.10.510.10:FF:000294">
    <property type="entry name" value="Serine/threonine-protein kinase OXI1"/>
    <property type="match status" value="1"/>
</dbReference>
<dbReference type="FunFam" id="1.10.510.10:FF:000312">
    <property type="entry name" value="Serine/threonine-protein kinase OXI1"/>
    <property type="match status" value="1"/>
</dbReference>
<dbReference type="FunFam" id="3.30.200.20:FF:000807">
    <property type="entry name" value="Serine/threonine-protein kinase UCNL"/>
    <property type="match status" value="1"/>
</dbReference>
<dbReference type="Gene3D" id="3.30.200.20">
    <property type="entry name" value="Phosphorylase Kinase, domain 1"/>
    <property type="match status" value="1"/>
</dbReference>
<dbReference type="Gene3D" id="1.10.510.10">
    <property type="entry name" value="Transferase(Phosphotransferase) domain 1"/>
    <property type="match status" value="2"/>
</dbReference>
<dbReference type="InterPro" id="IPR000961">
    <property type="entry name" value="AGC-kinase_C"/>
</dbReference>
<dbReference type="InterPro" id="IPR011009">
    <property type="entry name" value="Kinase-like_dom_sf"/>
</dbReference>
<dbReference type="InterPro" id="IPR000719">
    <property type="entry name" value="Prot_kinase_dom"/>
</dbReference>
<dbReference type="InterPro" id="IPR017441">
    <property type="entry name" value="Protein_kinase_ATP_BS"/>
</dbReference>
<dbReference type="InterPro" id="IPR008271">
    <property type="entry name" value="Ser/Thr_kinase_AS"/>
</dbReference>
<dbReference type="PANTHER" id="PTHR45637">
    <property type="entry name" value="FLIPPASE KINASE 1-RELATED"/>
    <property type="match status" value="1"/>
</dbReference>
<dbReference type="Pfam" id="PF00069">
    <property type="entry name" value="Pkinase"/>
    <property type="match status" value="2"/>
</dbReference>
<dbReference type="SMART" id="SM00220">
    <property type="entry name" value="S_TKc"/>
    <property type="match status" value="1"/>
</dbReference>
<dbReference type="SUPFAM" id="SSF56112">
    <property type="entry name" value="Protein kinase-like (PK-like)"/>
    <property type="match status" value="1"/>
</dbReference>
<dbReference type="PROSITE" id="PS51285">
    <property type="entry name" value="AGC_KINASE_CTER"/>
    <property type="match status" value="1"/>
</dbReference>
<dbReference type="PROSITE" id="PS00107">
    <property type="entry name" value="PROTEIN_KINASE_ATP"/>
    <property type="match status" value="1"/>
</dbReference>
<dbReference type="PROSITE" id="PS50011">
    <property type="entry name" value="PROTEIN_KINASE_DOM"/>
    <property type="match status" value="1"/>
</dbReference>
<dbReference type="PROSITE" id="PS00108">
    <property type="entry name" value="PROTEIN_KINASE_ST"/>
    <property type="match status" value="1"/>
</dbReference>
<accession>Q9LT38</accession>
<keyword id="KW-0067">ATP-binding</keyword>
<keyword id="KW-0963">Cytoplasm</keyword>
<keyword id="KW-0418">Kinase</keyword>
<keyword id="KW-0547">Nucleotide-binding</keyword>
<keyword id="KW-0539">Nucleus</keyword>
<keyword id="KW-0597">Phosphoprotein</keyword>
<keyword id="KW-1185">Reference proteome</keyword>
<keyword id="KW-0723">Serine/threonine-protein kinase</keyword>
<keyword id="KW-0808">Transferase</keyword>
<evidence type="ECO:0000250" key="1">
    <source>
        <dbReference type="UniProtKB" id="Q9SYB9"/>
    </source>
</evidence>
<evidence type="ECO:0000255" key="2">
    <source>
        <dbReference type="PROSITE-ProRule" id="PRU00159"/>
    </source>
</evidence>
<evidence type="ECO:0000255" key="3">
    <source>
        <dbReference type="PROSITE-ProRule" id="PRU00618"/>
    </source>
</evidence>
<evidence type="ECO:0000269" key="4">
    <source>
    </source>
</evidence>
<evidence type="ECO:0000303" key="5">
    <source>
    </source>
</evidence>
<evidence type="ECO:0000303" key="6">
    <source>
    </source>
</evidence>
<evidence type="ECO:0000305" key="7"/>
<evidence type="ECO:0000312" key="8">
    <source>
        <dbReference type="Araport" id="AT3G20830"/>
    </source>
</evidence>
<evidence type="ECO:0000312" key="9">
    <source>
        <dbReference type="EMBL" id="BAB02491.1"/>
    </source>
</evidence>
<protein>
    <recommendedName>
        <fullName evidence="7">Serine/threonine-protein kinase UCNL</fullName>
        <ecNumber evidence="1">2.7.11.1</ecNumber>
    </recommendedName>
    <alternativeName>
        <fullName evidence="5">AGC serine/threonine-protein kinase subfamily 2 member 4</fullName>
    </alternativeName>
    <alternativeName>
        <fullName evidence="6">Protein UNICORN-LIKE</fullName>
    </alternativeName>
</protein>